<protein>
    <recommendedName>
        <fullName evidence="1">Aspartate 1-decarboxylase</fullName>
        <ecNumber evidence="1">4.1.1.11</ecNumber>
    </recommendedName>
    <alternativeName>
        <fullName evidence="1">Aspartate alpha-decarboxylase</fullName>
    </alternativeName>
    <component>
        <recommendedName>
            <fullName evidence="1">Aspartate 1-decarboxylase beta chain</fullName>
        </recommendedName>
    </component>
    <component>
        <recommendedName>
            <fullName evidence="1">Aspartate 1-decarboxylase alpha chain</fullName>
        </recommendedName>
    </component>
</protein>
<evidence type="ECO:0000255" key="1">
    <source>
        <dbReference type="HAMAP-Rule" id="MF_00446"/>
    </source>
</evidence>
<accession>Q81FN5</accession>
<name>PAND_BACCR</name>
<organism>
    <name type="scientific">Bacillus cereus (strain ATCC 14579 / DSM 31 / CCUG 7414 / JCM 2152 / NBRC 15305 / NCIMB 9373 / NCTC 2599 / NRRL B-3711)</name>
    <dbReference type="NCBI Taxonomy" id="226900"/>
    <lineage>
        <taxon>Bacteria</taxon>
        <taxon>Bacillati</taxon>
        <taxon>Bacillota</taxon>
        <taxon>Bacilli</taxon>
        <taxon>Bacillales</taxon>
        <taxon>Bacillaceae</taxon>
        <taxon>Bacillus</taxon>
        <taxon>Bacillus cereus group</taxon>
    </lineage>
</organism>
<dbReference type="EC" id="4.1.1.11" evidence="1"/>
<dbReference type="EMBL" id="AE016877">
    <property type="protein sequence ID" value="AAP08522.1"/>
    <property type="molecule type" value="Genomic_DNA"/>
</dbReference>
<dbReference type="RefSeq" id="NP_831321.1">
    <property type="nucleotide sequence ID" value="NC_004722.1"/>
</dbReference>
<dbReference type="RefSeq" id="WP_000490184.1">
    <property type="nucleotide sequence ID" value="NZ_CP138336.1"/>
</dbReference>
<dbReference type="SMR" id="Q81FN5"/>
<dbReference type="STRING" id="226900.BC_1542"/>
<dbReference type="KEGG" id="bce:BC1542"/>
<dbReference type="PATRIC" id="fig|226900.8.peg.1518"/>
<dbReference type="HOGENOM" id="CLU_115305_2_0_9"/>
<dbReference type="OrthoDB" id="9803983at2"/>
<dbReference type="UniPathway" id="UPA00028">
    <property type="reaction ID" value="UER00002"/>
</dbReference>
<dbReference type="Proteomes" id="UP000001417">
    <property type="component" value="Chromosome"/>
</dbReference>
<dbReference type="GO" id="GO:0005829">
    <property type="term" value="C:cytosol"/>
    <property type="evidence" value="ECO:0000318"/>
    <property type="project" value="GO_Central"/>
</dbReference>
<dbReference type="GO" id="GO:0004068">
    <property type="term" value="F:aspartate 1-decarboxylase activity"/>
    <property type="evidence" value="ECO:0000318"/>
    <property type="project" value="GO_Central"/>
</dbReference>
<dbReference type="GO" id="GO:0006523">
    <property type="term" value="P:alanine biosynthetic process"/>
    <property type="evidence" value="ECO:0000318"/>
    <property type="project" value="GO_Central"/>
</dbReference>
<dbReference type="GO" id="GO:0015940">
    <property type="term" value="P:pantothenate biosynthetic process"/>
    <property type="evidence" value="ECO:0000318"/>
    <property type="project" value="GO_Central"/>
</dbReference>
<dbReference type="CDD" id="cd06919">
    <property type="entry name" value="Asp_decarbox"/>
    <property type="match status" value="1"/>
</dbReference>
<dbReference type="Gene3D" id="2.40.40.20">
    <property type="match status" value="1"/>
</dbReference>
<dbReference type="HAMAP" id="MF_00446">
    <property type="entry name" value="PanD"/>
    <property type="match status" value="1"/>
</dbReference>
<dbReference type="InterPro" id="IPR009010">
    <property type="entry name" value="Asp_de-COase-like_dom_sf"/>
</dbReference>
<dbReference type="InterPro" id="IPR003190">
    <property type="entry name" value="Asp_decarbox"/>
</dbReference>
<dbReference type="NCBIfam" id="TIGR00223">
    <property type="entry name" value="panD"/>
    <property type="match status" value="1"/>
</dbReference>
<dbReference type="PANTHER" id="PTHR21012">
    <property type="entry name" value="ASPARTATE 1-DECARBOXYLASE"/>
    <property type="match status" value="1"/>
</dbReference>
<dbReference type="PANTHER" id="PTHR21012:SF0">
    <property type="entry name" value="ASPARTATE 1-DECARBOXYLASE"/>
    <property type="match status" value="1"/>
</dbReference>
<dbReference type="Pfam" id="PF02261">
    <property type="entry name" value="Asp_decarbox"/>
    <property type="match status" value="1"/>
</dbReference>
<dbReference type="PIRSF" id="PIRSF006246">
    <property type="entry name" value="Asp_decarbox"/>
    <property type="match status" value="1"/>
</dbReference>
<dbReference type="SUPFAM" id="SSF50692">
    <property type="entry name" value="ADC-like"/>
    <property type="match status" value="1"/>
</dbReference>
<feature type="chain" id="PRO_0000023021" description="Aspartate 1-decarboxylase beta chain" evidence="1">
    <location>
        <begin position="1"/>
        <end position="24"/>
    </location>
</feature>
<feature type="chain" id="PRO_0000023022" description="Aspartate 1-decarboxylase alpha chain" evidence="1">
    <location>
        <begin position="25"/>
        <end position="127"/>
    </location>
</feature>
<feature type="active site" description="Schiff-base intermediate with substrate; via pyruvic acid" evidence="1">
    <location>
        <position position="25"/>
    </location>
</feature>
<feature type="active site" description="Proton donor" evidence="1">
    <location>
        <position position="58"/>
    </location>
</feature>
<feature type="binding site" evidence="1">
    <location>
        <position position="57"/>
    </location>
    <ligand>
        <name>substrate</name>
    </ligand>
</feature>
<feature type="binding site" evidence="1">
    <location>
        <begin position="73"/>
        <end position="75"/>
    </location>
    <ligand>
        <name>substrate</name>
    </ligand>
</feature>
<feature type="modified residue" description="Pyruvic acid (Ser)" evidence="1">
    <location>
        <position position="25"/>
    </location>
</feature>
<gene>
    <name evidence="1" type="primary">panD</name>
    <name type="ordered locus">BC_1542</name>
</gene>
<sequence length="127" mass="13926">MFRTMMRAKLHRATVTEANLNYVGSITIDEDLMDAVNIVENEKVQIVNNNNGARLETYVIKGERGSGVVCLNGAAARLVQPGDKVIIICYGLVTEEEIHTQEPKIAVLDDNNQIIEMLGAEKAGTIL</sequence>
<keyword id="KW-0068">Autocatalytic cleavage</keyword>
<keyword id="KW-0963">Cytoplasm</keyword>
<keyword id="KW-0210">Decarboxylase</keyword>
<keyword id="KW-0456">Lyase</keyword>
<keyword id="KW-0566">Pantothenate biosynthesis</keyword>
<keyword id="KW-0670">Pyruvate</keyword>
<keyword id="KW-1185">Reference proteome</keyword>
<keyword id="KW-0704">Schiff base</keyword>
<keyword id="KW-0865">Zymogen</keyword>
<proteinExistence type="inferred from homology"/>
<reference key="1">
    <citation type="journal article" date="2003" name="Nature">
        <title>Genome sequence of Bacillus cereus and comparative analysis with Bacillus anthracis.</title>
        <authorList>
            <person name="Ivanova N."/>
            <person name="Sorokin A."/>
            <person name="Anderson I."/>
            <person name="Galleron N."/>
            <person name="Candelon B."/>
            <person name="Kapatral V."/>
            <person name="Bhattacharyya A."/>
            <person name="Reznik G."/>
            <person name="Mikhailova N."/>
            <person name="Lapidus A."/>
            <person name="Chu L."/>
            <person name="Mazur M."/>
            <person name="Goltsman E."/>
            <person name="Larsen N."/>
            <person name="D'Souza M."/>
            <person name="Walunas T."/>
            <person name="Grechkin Y."/>
            <person name="Pusch G."/>
            <person name="Haselkorn R."/>
            <person name="Fonstein M."/>
            <person name="Ehrlich S.D."/>
            <person name="Overbeek R."/>
            <person name="Kyrpides N.C."/>
        </authorList>
    </citation>
    <scope>NUCLEOTIDE SEQUENCE [LARGE SCALE GENOMIC DNA]</scope>
    <source>
        <strain>ATCC 14579 / DSM 31 / CCUG 7414 / JCM 2152 / NBRC 15305 / NCIMB 9373 / NCTC 2599 / NRRL B-3711</strain>
    </source>
</reference>
<comment type="function">
    <text evidence="1">Catalyzes the pyruvoyl-dependent decarboxylation of aspartate to produce beta-alanine.</text>
</comment>
<comment type="catalytic activity">
    <reaction evidence="1">
        <text>L-aspartate + H(+) = beta-alanine + CO2</text>
        <dbReference type="Rhea" id="RHEA:19497"/>
        <dbReference type="ChEBI" id="CHEBI:15378"/>
        <dbReference type="ChEBI" id="CHEBI:16526"/>
        <dbReference type="ChEBI" id="CHEBI:29991"/>
        <dbReference type="ChEBI" id="CHEBI:57966"/>
        <dbReference type="EC" id="4.1.1.11"/>
    </reaction>
</comment>
<comment type="cofactor">
    <cofactor evidence="1">
        <name>pyruvate</name>
        <dbReference type="ChEBI" id="CHEBI:15361"/>
    </cofactor>
    <text evidence="1">Binds 1 pyruvoyl group covalently per subunit.</text>
</comment>
<comment type="pathway">
    <text evidence="1">Cofactor biosynthesis; (R)-pantothenate biosynthesis; beta-alanine from L-aspartate: step 1/1.</text>
</comment>
<comment type="subunit">
    <text evidence="1">Heterooctamer of four alpha and four beta subunits.</text>
</comment>
<comment type="subcellular location">
    <subcellularLocation>
        <location evidence="1">Cytoplasm</location>
    </subcellularLocation>
</comment>
<comment type="PTM">
    <text evidence="1">Is synthesized initially as an inactive proenzyme, which is activated by self-cleavage at a specific serine bond to produce a beta-subunit with a hydroxyl group at its C-terminus and an alpha-subunit with a pyruvoyl group at its N-terminus.</text>
</comment>
<comment type="similarity">
    <text evidence="1">Belongs to the PanD family.</text>
</comment>